<comment type="function">
    <text evidence="1">Proton-coupled monocarboxylate symporter. Catalyzes the rapid transport across the plasma membrane of monocarboxylates such as L-lactate, pyruvate and ketone bodies, acetoacetate, beta-hydroxybutyrate and acetate. Dimerization is functionally required and both subunits work cooperatively in transporting substrate.</text>
</comment>
<comment type="catalytic activity">
    <reaction evidence="4">
        <text>3-methyl-2-oxobutanoate(out) + H(+)(out) = 3-methyl-2-oxobutanoate(in) + H(+)(in)</text>
        <dbReference type="Rhea" id="RHEA:71783"/>
        <dbReference type="ChEBI" id="CHEBI:11851"/>
        <dbReference type="ChEBI" id="CHEBI:15378"/>
    </reaction>
</comment>
<comment type="catalytic activity">
    <reaction evidence="4">
        <text>(S)-lactate(in) + H(+)(in) = (S)-lactate(out) + H(+)(out)</text>
        <dbReference type="Rhea" id="RHEA:29415"/>
        <dbReference type="ChEBI" id="CHEBI:15378"/>
        <dbReference type="ChEBI" id="CHEBI:16651"/>
    </reaction>
</comment>
<comment type="catalytic activity">
    <reaction evidence="4">
        <text>acetoacetate(out) + H(+)(out) = acetoacetate(in) + H(+)(in)</text>
        <dbReference type="Rhea" id="RHEA:71775"/>
        <dbReference type="ChEBI" id="CHEBI:13705"/>
        <dbReference type="ChEBI" id="CHEBI:15378"/>
    </reaction>
</comment>
<comment type="catalytic activity">
    <reaction evidence="4">
        <text>(R)-3-hydroxybutanoate(out) + H(+)(out) = (R)-3-hydroxybutanoate(in) + H(+)(in)</text>
        <dbReference type="Rhea" id="RHEA:71795"/>
        <dbReference type="ChEBI" id="CHEBI:10983"/>
        <dbReference type="ChEBI" id="CHEBI:15378"/>
    </reaction>
</comment>
<comment type="catalytic activity">
    <reaction evidence="4">
        <text>4-methyl-2-oxopentanoate(out) + H(+)(out) = 4-methyl-2-oxopentanoate(in) + H(+)(in)</text>
        <dbReference type="Rhea" id="RHEA:71779"/>
        <dbReference type="ChEBI" id="CHEBI:15378"/>
        <dbReference type="ChEBI" id="CHEBI:17865"/>
    </reaction>
</comment>
<comment type="catalytic activity">
    <reaction evidence="4">
        <text>pyruvate(out) + H(+)(out) = pyruvate(in) + H(+)(in)</text>
        <dbReference type="Rhea" id="RHEA:64720"/>
        <dbReference type="ChEBI" id="CHEBI:15361"/>
        <dbReference type="ChEBI" id="CHEBI:15378"/>
    </reaction>
    <physiologicalReaction direction="left-to-right" evidence="1">
        <dbReference type="Rhea" id="RHEA:64721"/>
    </physiologicalReaction>
    <physiologicalReaction direction="right-to-left" evidence="1">
        <dbReference type="Rhea" id="RHEA:64722"/>
    </physiologicalReaction>
</comment>
<comment type="catalytic activity">
    <reaction evidence="4">
        <text>(S)-3-hydroxybutanoate(out) + H(+)(out) = (S)-3-hydroxybutanoate(in) + H(+)(in)</text>
        <dbReference type="Rhea" id="RHEA:71871"/>
        <dbReference type="ChEBI" id="CHEBI:11047"/>
        <dbReference type="ChEBI" id="CHEBI:15378"/>
    </reaction>
</comment>
<comment type="activity regulation">
    <text evidence="1">Transport activity exhibits steep dependence on substrate concentration. Substrate concentration sensitivity of SLC16A7 arises from the strong inter-subunit cooperativity of the SLC16A7 dimer during transport. Inhibited by AR-C155858.</text>
</comment>
<comment type="subunit">
    <text evidence="1 2 4">Homodimer (By similarity). Interacts with GRID2IP (By similarity). Interacts with EMB; interaction mediates SLC16A7 targeting to the plasma membrane (By similarity). Interacts with isoform 2 of BSG (By similarity).</text>
</comment>
<comment type="subcellular location">
    <subcellularLocation>
        <location evidence="4">Cell membrane</location>
        <topology evidence="1">Multi-pass membrane protein</topology>
    </subcellularLocation>
    <subcellularLocation>
        <location evidence="3">Basolateral cell membrane</location>
        <topology evidence="1">Multi-pass membrane protein</topology>
    </subcellularLocation>
    <subcellularLocation>
        <location evidence="2">Cytoplasm</location>
    </subcellularLocation>
    <text evidence="2 4">Requires the ancillary protein, EMB for plasma membrane localization (By similarity). Colocalizes with BSG in spermatozoa. Detected in the cytoplasm of Sertoli cells (By similarity).</text>
</comment>
<comment type="similarity">
    <text evidence="7">Belongs to the major facilitator superfamily. Monocarboxylate porter (TC 2.A.1.13) family.</text>
</comment>
<feature type="chain" id="PRO_0000211387" description="Monocarboxylate transporter 2">
    <location>
        <begin position="1"/>
        <end position="484"/>
    </location>
</feature>
<feature type="topological domain" description="Cytoplasmic" evidence="7">
    <location>
        <begin position="1"/>
        <end position="16"/>
    </location>
</feature>
<feature type="transmembrane region" description="Helical; Name=1" evidence="5">
    <location>
        <begin position="17"/>
        <end position="37"/>
    </location>
</feature>
<feature type="topological domain" description="Extracellular" evidence="7">
    <location>
        <begin position="38"/>
        <end position="60"/>
    </location>
</feature>
<feature type="transmembrane region" description="Helical; Name=2" evidence="5">
    <location>
        <begin position="61"/>
        <end position="81"/>
    </location>
</feature>
<feature type="topological domain" description="Cytoplasmic" evidence="7">
    <location>
        <begin position="82"/>
        <end position="87"/>
    </location>
</feature>
<feature type="transmembrane region" description="Helical; Name=3" evidence="5">
    <location>
        <begin position="88"/>
        <end position="108"/>
    </location>
</feature>
<feature type="topological domain" description="Extracellular" evidence="7">
    <location>
        <begin position="109"/>
        <end position="116"/>
    </location>
</feature>
<feature type="transmembrane region" description="Helical; Name=4" evidence="5">
    <location>
        <begin position="117"/>
        <end position="137"/>
    </location>
</feature>
<feature type="topological domain" description="Cytoplasmic" evidence="7">
    <location>
        <begin position="138"/>
        <end position="144"/>
    </location>
</feature>
<feature type="transmembrane region" description="Helical; Name=5" evidence="5">
    <location>
        <begin position="145"/>
        <end position="165"/>
    </location>
</feature>
<feature type="topological domain" description="Extracellular" evidence="7">
    <location>
        <begin position="166"/>
        <end position="174"/>
    </location>
</feature>
<feature type="transmembrane region" description="Helical; Name=6" evidence="5">
    <location>
        <begin position="175"/>
        <end position="195"/>
    </location>
</feature>
<feature type="topological domain" description="Cytoplasmic" evidence="7">
    <location>
        <begin position="196"/>
        <end position="245"/>
    </location>
</feature>
<feature type="transmembrane region" description="Helical; Name=7" evidence="5">
    <location>
        <begin position="246"/>
        <end position="266"/>
    </location>
</feature>
<feature type="topological domain" description="Extracellular" evidence="7">
    <location>
        <begin position="267"/>
        <end position="281"/>
    </location>
</feature>
<feature type="transmembrane region" description="Helical; Name=8" evidence="5">
    <location>
        <begin position="282"/>
        <end position="302"/>
    </location>
</feature>
<feature type="topological domain" description="Cytoplasmic" evidence="7">
    <location>
        <begin position="303"/>
        <end position="311"/>
    </location>
</feature>
<feature type="transmembrane region" description="Helical; Name=9" evidence="5">
    <location>
        <begin position="312"/>
        <end position="332"/>
    </location>
</feature>
<feature type="topological domain" description="Extracellular" evidence="7">
    <location>
        <begin position="333"/>
        <end position="337"/>
    </location>
</feature>
<feature type="transmembrane region" description="Helical; Name=10" evidence="5">
    <location>
        <begin position="338"/>
        <end position="358"/>
    </location>
</feature>
<feature type="topological domain" description="Cytoplasmic" evidence="7">
    <location>
        <begin position="359"/>
        <end position="372"/>
    </location>
</feature>
<feature type="transmembrane region" description="Helical; Name=11" evidence="5">
    <location>
        <begin position="373"/>
        <end position="393"/>
    </location>
</feature>
<feature type="topological domain" description="Extracellular" evidence="7">
    <location>
        <begin position="394"/>
        <end position="405"/>
    </location>
</feature>
<feature type="transmembrane region" description="Helical; Name=12" evidence="5">
    <location>
        <begin position="406"/>
        <end position="426"/>
    </location>
</feature>
<feature type="topological domain" description="Cytoplasmic" evidence="7">
    <location>
        <begin position="427"/>
        <end position="484"/>
    </location>
</feature>
<feature type="region of interest" description="Disordered" evidence="6">
    <location>
        <begin position="198"/>
        <end position="223"/>
    </location>
</feature>
<feature type="region of interest" description="Disordered" evidence="6">
    <location>
        <begin position="437"/>
        <end position="484"/>
    </location>
</feature>
<feature type="compositionally biased region" description="Basic residues" evidence="6">
    <location>
        <begin position="438"/>
        <end position="448"/>
    </location>
</feature>
<feature type="compositionally biased region" description="Basic and acidic residues" evidence="6">
    <location>
        <begin position="449"/>
        <end position="465"/>
    </location>
</feature>
<feature type="compositionally biased region" description="Basic and acidic residues" evidence="6">
    <location>
        <begin position="474"/>
        <end position="484"/>
    </location>
</feature>
<feature type="site" description="May be protonated during monocarboxylate transport" evidence="1">
    <location>
        <position position="292"/>
    </location>
</feature>
<organism>
    <name type="scientific">Meriones unguiculatus</name>
    <name type="common">Mongolian jird</name>
    <name type="synonym">Gerbillus unguiculatus</name>
    <dbReference type="NCBI Taxonomy" id="10047"/>
    <lineage>
        <taxon>Eukaryota</taxon>
        <taxon>Metazoa</taxon>
        <taxon>Chordata</taxon>
        <taxon>Craniata</taxon>
        <taxon>Vertebrata</taxon>
        <taxon>Euteleostomi</taxon>
        <taxon>Mammalia</taxon>
        <taxon>Eutheria</taxon>
        <taxon>Euarchontoglires</taxon>
        <taxon>Glires</taxon>
        <taxon>Rodentia</taxon>
        <taxon>Myomorpha</taxon>
        <taxon>Muroidea</taxon>
        <taxon>Muridae</taxon>
        <taxon>Gerbillinae</taxon>
        <taxon>Meriones</taxon>
    </lineage>
</organism>
<keyword id="KW-1003">Cell membrane</keyword>
<keyword id="KW-0963">Cytoplasm</keyword>
<keyword id="KW-0472">Membrane</keyword>
<keyword id="KW-0769">Symport</keyword>
<keyword id="KW-0812">Transmembrane</keyword>
<keyword id="KW-1133">Transmembrane helix</keyword>
<keyword id="KW-0813">Transport</keyword>
<sequence length="484" mass="52758">MPAPTAVPPPHPLPPDGGWGWVVVGASFISIGFSYAFPKSVTVFFKDIQEIFRAGHSKVAWISSIMLAVMYAGGPISSVLVNKYGSRPVVVIGGLLCCTGMILASFSTSMIQLYLTIGFISGLGLAFNLQPALTILGKYFYRRRPLASGLAMTGSPVFLSSLAPFNQYLFNSYGLKGSFLILGGIFLHSCVAGSLMRPVGTSQQSPKSKSKVSSRHDSSTKKAPKLTLAQRINMFLDFSLFKHRGFLIYLSGNVIMFLGFFAPVIFLSPYAKNRGVDDYKAAYLLSVMAFVDMFSRPCGGLIANTRLVRPRIQYFFSLAIVFTGVCHLLCPLAESYTALVVYAIFFGYGFGSVSSILFETLMDLVGPARFSSAVGLVTIVECCPVLLGPPLAGKLVDETGEHKYLFVASGAIVVLAGIWLFIGNAINYRLLAKERKREKARKKKSPNRHSKELESLSKSNQDDVAVRVPQAHRSPSDKERESNI</sequence>
<protein>
    <recommendedName>
        <fullName>Monocarboxylate transporter 2</fullName>
        <shortName>MCT 2</shortName>
    </recommendedName>
    <alternativeName>
        <fullName>Solute carrier family 16 member 7</fullName>
    </alternativeName>
</protein>
<name>MOT2_MERUN</name>
<accession>O35440</accession>
<proteinExistence type="evidence at transcript level"/>
<evidence type="ECO:0000250" key="1">
    <source>
        <dbReference type="UniProtKB" id="O60669"/>
    </source>
</evidence>
<evidence type="ECO:0000250" key="2">
    <source>
        <dbReference type="UniProtKB" id="O70451"/>
    </source>
</evidence>
<evidence type="ECO:0000250" key="3">
    <source>
        <dbReference type="UniProtKB" id="P53988"/>
    </source>
</evidence>
<evidence type="ECO:0000250" key="4">
    <source>
        <dbReference type="UniProtKB" id="Q63344"/>
    </source>
</evidence>
<evidence type="ECO:0000255" key="5"/>
<evidence type="ECO:0000256" key="6">
    <source>
        <dbReference type="SAM" id="MobiDB-lite"/>
    </source>
</evidence>
<evidence type="ECO:0000305" key="7"/>
<dbReference type="EMBL" id="NHTI01001178">
    <property type="status" value="NOT_ANNOTATED_CDS"/>
    <property type="molecule type" value="Genomic_DNA"/>
</dbReference>
<dbReference type="EMBL" id="AF029767">
    <property type="protein sequence ID" value="AAB84219.1"/>
    <property type="molecule type" value="mRNA"/>
</dbReference>
<dbReference type="SMR" id="O35440"/>
<dbReference type="OrthoDB" id="6499973at2759"/>
<dbReference type="GO" id="GO:0016323">
    <property type="term" value="C:basolateral plasma membrane"/>
    <property type="evidence" value="ECO:0000250"/>
    <property type="project" value="UniProtKB"/>
</dbReference>
<dbReference type="GO" id="GO:0005737">
    <property type="term" value="C:cytoplasm"/>
    <property type="evidence" value="ECO:0007669"/>
    <property type="project" value="UniProtKB-SubCell"/>
</dbReference>
<dbReference type="GO" id="GO:0005886">
    <property type="term" value="C:plasma membrane"/>
    <property type="evidence" value="ECO:0000250"/>
    <property type="project" value="UniProtKB"/>
</dbReference>
<dbReference type="GO" id="GO:0042802">
    <property type="term" value="F:identical protein binding"/>
    <property type="evidence" value="ECO:0000250"/>
    <property type="project" value="UniProtKB"/>
</dbReference>
<dbReference type="GO" id="GO:0015129">
    <property type="term" value="F:lactate transmembrane transporter activity"/>
    <property type="evidence" value="ECO:0000250"/>
    <property type="project" value="UniProtKB"/>
</dbReference>
<dbReference type="GO" id="GO:0050833">
    <property type="term" value="F:pyruvate transmembrane transporter activity"/>
    <property type="evidence" value="ECO:0000250"/>
    <property type="project" value="UniProtKB"/>
</dbReference>
<dbReference type="GO" id="GO:0015293">
    <property type="term" value="F:symporter activity"/>
    <property type="evidence" value="ECO:0000250"/>
    <property type="project" value="UniProtKB"/>
</dbReference>
<dbReference type="GO" id="GO:0035873">
    <property type="term" value="P:lactate transmembrane transport"/>
    <property type="evidence" value="ECO:0000250"/>
    <property type="project" value="UniProtKB"/>
</dbReference>
<dbReference type="GO" id="GO:0035879">
    <property type="term" value="P:plasma membrane lactate transport"/>
    <property type="evidence" value="ECO:0007669"/>
    <property type="project" value="TreeGrafter"/>
</dbReference>
<dbReference type="GO" id="GO:1901475">
    <property type="term" value="P:pyruvate transmembrane transport"/>
    <property type="evidence" value="ECO:0000250"/>
    <property type="project" value="UniProtKB"/>
</dbReference>
<dbReference type="FunFam" id="1.20.1250.20:FF:000030">
    <property type="entry name" value="monocarboxylate transporter 1 isoform X1"/>
    <property type="match status" value="1"/>
</dbReference>
<dbReference type="Gene3D" id="1.20.1250.20">
    <property type="entry name" value="MFS general substrate transporter like domains"/>
    <property type="match status" value="1"/>
</dbReference>
<dbReference type="InterPro" id="IPR004743">
    <property type="entry name" value="MCT"/>
</dbReference>
<dbReference type="InterPro" id="IPR011701">
    <property type="entry name" value="MFS"/>
</dbReference>
<dbReference type="InterPro" id="IPR020846">
    <property type="entry name" value="MFS_dom"/>
</dbReference>
<dbReference type="InterPro" id="IPR036259">
    <property type="entry name" value="MFS_trans_sf"/>
</dbReference>
<dbReference type="InterPro" id="IPR050327">
    <property type="entry name" value="Proton-linked_MCT"/>
</dbReference>
<dbReference type="NCBIfam" id="TIGR00892">
    <property type="entry name" value="2A0113"/>
    <property type="match status" value="1"/>
</dbReference>
<dbReference type="PANTHER" id="PTHR11360">
    <property type="entry name" value="MONOCARBOXYLATE TRANSPORTER"/>
    <property type="match status" value="1"/>
</dbReference>
<dbReference type="PANTHER" id="PTHR11360:SF25">
    <property type="entry name" value="MONOCARBOXYLATE TRANSPORTER 2"/>
    <property type="match status" value="1"/>
</dbReference>
<dbReference type="Pfam" id="PF07690">
    <property type="entry name" value="MFS_1"/>
    <property type="match status" value="1"/>
</dbReference>
<dbReference type="SUPFAM" id="SSF103473">
    <property type="entry name" value="MFS general substrate transporter"/>
    <property type="match status" value="1"/>
</dbReference>
<dbReference type="PROSITE" id="PS50850">
    <property type="entry name" value="MFS"/>
    <property type="match status" value="1"/>
</dbReference>
<reference key="1">
    <citation type="submission" date="2017-05" db="EMBL/GenBank/DDBJ databases">
        <title>De novo sequencing and initial annotation of the mongolian gerbil (Meriones unguiculatus) genome.</title>
        <authorList>
            <person name="Zorio D.A.R."/>
            <person name="Monsma S.A."/>
            <person name="Sanes D.H."/>
            <person name="Golding N.L."/>
            <person name="Rubel E.W."/>
            <person name="Wang Y."/>
        </authorList>
    </citation>
    <scope>NUCLEOTIDE SEQUENCE [LARGE SCALE GENOMIC DNA]</scope>
</reference>
<reference key="2">
    <citation type="journal article" date="1997" name="Hear. Res.">
        <title>Functional evidence for a monocarboxylate transporter (MCT) in strial marginal cells and molecular evidence for MCT1 and MCT2 in stria vascularis.</title>
        <authorList>
            <person name="Shimozono M."/>
            <person name="Scofield M.A."/>
            <person name="Wangemann P."/>
        </authorList>
    </citation>
    <scope>NUCLEOTIDE SEQUENCE [MRNA] OF 289-359</scope>
    <source>
        <tissue>Stria vascularis</tissue>
    </source>
</reference>
<gene>
    <name type="primary">SLC16A7</name>
    <name type="synonym">MCT2</name>
</gene>